<comment type="function">
    <text evidence="3 9">Required for efficient assembly and nuclear export of the 60S ribosomal subunit. Involved in asymmetric localization of ASH1 mRNA.</text>
</comment>
<comment type="subunit">
    <text evidence="4 7 8 10">Component of the 66S pre-ribosomal particle. Interacts with NOP7, RRP1, RRP15 and SHE2.</text>
</comment>
<comment type="interaction">
    <interactant intactId="EBI-22906">
        <id>P43586</id>
    </interactant>
    <interactant intactId="EBI-3775">
        <id>Q08235</id>
        <label>BRX1</label>
    </interactant>
    <organismsDiffer>false</organismsDiffer>
    <experiments>4</experiments>
</comment>
<comment type="interaction">
    <interactant intactId="EBI-22906">
        <id>P43586</id>
    </interactant>
    <interactant intactId="EBI-5644">
        <id>Q12389</id>
        <label>DBP10</label>
    </interactant>
    <organismsDiffer>false</organismsDiffer>
    <experiments>6</experiments>
</comment>
<comment type="interaction">
    <interactant intactId="EBI-22906">
        <id>P43586</id>
    </interactant>
    <interactant intactId="EBI-6170">
        <id>P32892</id>
        <label>DRS1</label>
    </interactant>
    <organismsDiffer>false</organismsDiffer>
    <experiments>5</experiments>
</comment>
<comment type="interaction">
    <interactant intactId="EBI-22906">
        <id>P43586</id>
    </interactant>
    <interactant intactId="EBI-6289">
        <id>P36049</id>
        <label>EBP2</label>
    </interactant>
    <organismsDiffer>false</organismsDiffer>
    <experiments>7</experiments>
</comment>
<comment type="interaction">
    <interactant intactId="EBI-22906">
        <id>P43586</id>
    </interactant>
    <interactant intactId="EBI-6951">
        <id>P38911</id>
        <label>FPR3</label>
    </interactant>
    <organismsDiffer>false</organismsDiffer>
    <experiments>4</experiments>
</comment>
<comment type="interaction">
    <interactant intactId="EBI-22906">
        <id>P43586</id>
    </interactant>
    <interactant intactId="EBI-6956">
        <id>Q06205</id>
        <label>FPR4</label>
    </interactant>
    <organismsDiffer>false</organismsDiffer>
    <experiments>4</experiments>
</comment>
<comment type="interaction">
    <interactant intactId="EBI-22906">
        <id>P43586</id>
    </interactant>
    <interactant intactId="EBI-8170">
        <id>Q03532</id>
        <label>HAS1</label>
    </interactant>
    <organismsDiffer>false</organismsDiffer>
    <experiments>6</experiments>
</comment>
<comment type="interaction">
    <interactant intactId="EBI-22906">
        <id>P43586</id>
    </interactant>
    <interactant intactId="EBI-22906">
        <id>P43586</id>
        <label>LOC1</label>
    </interactant>
    <organismsDiffer>false</organismsDiffer>
    <experiments>3</experiments>
</comment>
<comment type="interaction">
    <interactant intactId="EBI-22906">
        <id>P43586</id>
    </interactant>
    <interactant intactId="EBI-10944">
        <id>Q12176</id>
        <label>MAK21</label>
    </interactant>
    <organismsDiffer>false</organismsDiffer>
    <experiments>3</experiments>
</comment>
<comment type="interaction">
    <interactant intactId="EBI-22906">
        <id>P43586</id>
    </interactant>
    <interactant intactId="EBI-10394">
        <id>P38112</id>
        <label>MAK5</label>
    </interactant>
    <organismsDiffer>false</organismsDiffer>
    <experiments>3</experiments>
</comment>
<comment type="interaction">
    <interactant intactId="EBI-22906">
        <id>P43586</id>
    </interactant>
    <interactant intactId="EBI-29259">
        <id>P39744</id>
        <label>NOC2</label>
    </interactant>
    <organismsDiffer>false</organismsDiffer>
    <experiments>7</experiments>
</comment>
<comment type="interaction">
    <interactant intactId="EBI-22906">
        <id>P43586</id>
    </interactant>
    <interactant intactId="EBI-12105">
        <id>Q02892</id>
        <label>NOG1</label>
    </interactant>
    <organismsDiffer>false</organismsDiffer>
    <experiments>5</experiments>
</comment>
<comment type="interaction">
    <interactant intactId="EBI-22906">
        <id>P43586</id>
    </interactant>
    <interactant intactId="EBI-35895">
        <id>Q08208</id>
        <label>NOP12</label>
    </interactant>
    <organismsDiffer>false</organismsDiffer>
    <experiments>4</experiments>
</comment>
<comment type="interaction">
    <interactant intactId="EBI-22906">
        <id>P43586</id>
    </interactant>
    <interactant intactId="EBI-22439">
        <id>P40007</id>
        <label>NOP16</label>
    </interactant>
    <organismsDiffer>false</organismsDiffer>
    <experiments>3</experiments>
</comment>
<comment type="interaction">
    <interactant intactId="EBI-22906">
        <id>P43586</id>
    </interactant>
    <interactant intactId="EBI-12122">
        <id>P37838</id>
        <label>NOP4</label>
    </interactant>
    <organismsDiffer>false</organismsDiffer>
    <experiments>5</experiments>
</comment>
<comment type="interaction">
    <interactant intactId="EBI-22906">
        <id>P43586</id>
    </interactant>
    <interactant intactId="EBI-29395">
        <id>Q12080</id>
        <label>NOP53</label>
    </interactant>
    <organismsDiffer>false</organismsDiffer>
    <experiments>3</experiments>
</comment>
<comment type="interaction">
    <interactant intactId="EBI-22906">
        <id>P43586</id>
    </interactant>
    <interactant intactId="EBI-22449">
        <id>P40010</id>
        <label>NUG1</label>
    </interactant>
    <organismsDiffer>false</organismsDiffer>
    <experiments>5</experiments>
</comment>
<comment type="interaction">
    <interactant intactId="EBI-22906">
        <id>P43586</id>
    </interactant>
    <interactant intactId="EBI-505">
        <id>P53131</id>
        <label>PRP43</label>
    </interactant>
    <organismsDiffer>false</organismsDiffer>
    <experiments>3</experiments>
</comment>
<comment type="interaction">
    <interactant intactId="EBI-22906">
        <id>P43586</id>
    </interactant>
    <interactant intactId="EBI-30678">
        <id>Q12754</id>
        <label>RRP12</label>
    </interactant>
    <organismsDiffer>false</organismsDiffer>
    <experiments>3</experiments>
</comment>
<comment type="interaction">
    <interactant intactId="EBI-22906">
        <id>P43586</id>
    </interactant>
    <interactant intactId="EBI-26762">
        <id>P36080</id>
        <label>RRP14</label>
    </interactant>
    <organismsDiffer>false</organismsDiffer>
    <experiments>4</experiments>
</comment>
<comment type="interaction">
    <interactant intactId="EBI-22906">
        <id>P43586</id>
    </interactant>
    <interactant intactId="EBI-17814">
        <id>P25582</id>
        <label>SPB1</label>
    </interactant>
    <organismsDiffer>false</organismsDiffer>
    <experiments>5</experiments>
</comment>
<comment type="subcellular location">
    <subcellularLocation>
        <location evidence="3 5">Nucleus</location>
        <location evidence="3 5">Nucleolus</location>
    </subcellularLocation>
</comment>
<comment type="miscellaneous">
    <text evidence="6">Present with 3650 molecules/cell in log phase SD medium.</text>
</comment>
<comment type="similarity">
    <text evidence="11">Belongs to the LOC1 family.</text>
</comment>
<organism>
    <name type="scientific">Saccharomyces cerevisiae (strain ATCC 204508 / S288c)</name>
    <name type="common">Baker's yeast</name>
    <dbReference type="NCBI Taxonomy" id="559292"/>
    <lineage>
        <taxon>Eukaryota</taxon>
        <taxon>Fungi</taxon>
        <taxon>Dikarya</taxon>
        <taxon>Ascomycota</taxon>
        <taxon>Saccharomycotina</taxon>
        <taxon>Saccharomycetes</taxon>
        <taxon>Saccharomycetales</taxon>
        <taxon>Saccharomycetaceae</taxon>
        <taxon>Saccharomyces</taxon>
    </lineage>
</organism>
<gene>
    <name type="primary">LOC1</name>
    <name type="ordered locus">YFR001W</name>
</gene>
<evidence type="ECO:0000255" key="1"/>
<evidence type="ECO:0000256" key="2">
    <source>
        <dbReference type="SAM" id="MobiDB-lite"/>
    </source>
</evidence>
<evidence type="ECO:0000269" key="3">
    <source>
    </source>
</evidence>
<evidence type="ECO:0000269" key="4">
    <source>
    </source>
</evidence>
<evidence type="ECO:0000269" key="5">
    <source>
    </source>
</evidence>
<evidence type="ECO:0000269" key="6">
    <source>
    </source>
</evidence>
<evidence type="ECO:0000269" key="7">
    <source>
    </source>
</evidence>
<evidence type="ECO:0000269" key="8">
    <source>
    </source>
</evidence>
<evidence type="ECO:0000269" key="9">
    <source>
    </source>
</evidence>
<evidence type="ECO:0000269" key="10">
    <source>
    </source>
</evidence>
<evidence type="ECO:0000305" key="11"/>
<evidence type="ECO:0007744" key="12">
    <source>
    </source>
</evidence>
<evidence type="ECO:0007829" key="13">
    <source>
        <dbReference type="PDB" id="7R6K"/>
    </source>
</evidence>
<dbReference type="EMBL" id="D50617">
    <property type="protein sequence ID" value="BAA09240.1"/>
    <property type="molecule type" value="Genomic_DNA"/>
</dbReference>
<dbReference type="EMBL" id="AY557809">
    <property type="protein sequence ID" value="AAS56135.1"/>
    <property type="molecule type" value="Genomic_DNA"/>
</dbReference>
<dbReference type="EMBL" id="BK006940">
    <property type="protein sequence ID" value="DAA12441.1"/>
    <property type="molecule type" value="Genomic_DNA"/>
</dbReference>
<dbReference type="PIR" id="S56256">
    <property type="entry name" value="S56256"/>
</dbReference>
<dbReference type="RefSeq" id="NP_116656.1">
    <property type="nucleotide sequence ID" value="NM_001179966.1"/>
</dbReference>
<dbReference type="PDB" id="7NAC">
    <property type="method" value="EM"/>
    <property type="resolution" value="3.04 A"/>
    <property type="chains" value="7=1-204"/>
</dbReference>
<dbReference type="PDB" id="7R6K">
    <property type="method" value="EM"/>
    <property type="resolution" value="3.17 A"/>
    <property type="chains" value="7=1-204"/>
</dbReference>
<dbReference type="PDB" id="7R7A">
    <property type="method" value="EM"/>
    <property type="resolution" value="3.04 A"/>
    <property type="chains" value="7=1-204"/>
</dbReference>
<dbReference type="PDB" id="7R7C">
    <property type="method" value="EM"/>
    <property type="resolution" value="3.71 A"/>
    <property type="chains" value="7=1-204"/>
</dbReference>
<dbReference type="PDB" id="8V83">
    <property type="method" value="EM"/>
    <property type="resolution" value="2.53 A"/>
    <property type="chains" value="7=1-204"/>
</dbReference>
<dbReference type="PDB" id="8V84">
    <property type="method" value="EM"/>
    <property type="resolution" value="2.70 A"/>
    <property type="chains" value="7=1-204"/>
</dbReference>
<dbReference type="PDB" id="8V87">
    <property type="method" value="EM"/>
    <property type="resolution" value="2.66 A"/>
    <property type="chains" value="7=1-204"/>
</dbReference>
<dbReference type="PDBsum" id="7NAC"/>
<dbReference type="PDBsum" id="7R6K"/>
<dbReference type="PDBsum" id="7R7A"/>
<dbReference type="PDBsum" id="7R7C"/>
<dbReference type="PDBsum" id="8V83"/>
<dbReference type="PDBsum" id="8V84"/>
<dbReference type="PDBsum" id="8V87"/>
<dbReference type="EMDB" id="EMD-24269"/>
<dbReference type="EMDB" id="EMD-24280"/>
<dbReference type="EMDB" id="EMD-24296"/>
<dbReference type="EMDB" id="EMD-24297"/>
<dbReference type="EMDB" id="EMD-43017"/>
<dbReference type="EMDB" id="EMD-43021"/>
<dbReference type="EMDB" id="EMD-43027"/>
<dbReference type="SMR" id="P43586"/>
<dbReference type="BioGRID" id="31149">
    <property type="interactions" value="189"/>
</dbReference>
<dbReference type="DIP" id="DIP-6615N"/>
<dbReference type="FunCoup" id="P43586">
    <property type="interactions" value="462"/>
</dbReference>
<dbReference type="IntAct" id="P43586">
    <property type="interactions" value="96"/>
</dbReference>
<dbReference type="MINT" id="P43586"/>
<dbReference type="STRING" id="4932.YFR001W"/>
<dbReference type="iPTMnet" id="P43586"/>
<dbReference type="PaxDb" id="4932-YFR001W"/>
<dbReference type="PeptideAtlas" id="P43586"/>
<dbReference type="EnsemblFungi" id="YFR001W_mRNA">
    <property type="protein sequence ID" value="YFR001W"/>
    <property type="gene ID" value="YFR001W"/>
</dbReference>
<dbReference type="GeneID" id="850551"/>
<dbReference type="KEGG" id="sce:YFR001W"/>
<dbReference type="AGR" id="SGD:S000001897"/>
<dbReference type="SGD" id="S000001897">
    <property type="gene designation" value="LOC1"/>
</dbReference>
<dbReference type="VEuPathDB" id="FungiDB:YFR001W"/>
<dbReference type="eggNOG" id="ENOG502RY6R">
    <property type="taxonomic scope" value="Eukaryota"/>
</dbReference>
<dbReference type="HOGENOM" id="CLU_096593_1_0_1"/>
<dbReference type="InParanoid" id="P43586"/>
<dbReference type="OMA" id="RESMNTI"/>
<dbReference type="OrthoDB" id="1743802at2759"/>
<dbReference type="BioCyc" id="YEAST:G3O-30454-MONOMER"/>
<dbReference type="BioGRID-ORCS" id="850551">
    <property type="hits" value="0 hits in 10 CRISPR screens"/>
</dbReference>
<dbReference type="PRO" id="PR:P43586"/>
<dbReference type="Proteomes" id="UP000002311">
    <property type="component" value="Chromosome VI"/>
</dbReference>
<dbReference type="RNAct" id="P43586">
    <property type="molecule type" value="protein"/>
</dbReference>
<dbReference type="GO" id="GO:0005737">
    <property type="term" value="C:cytoplasm"/>
    <property type="evidence" value="ECO:0007005"/>
    <property type="project" value="SGD"/>
</dbReference>
<dbReference type="GO" id="GO:0005730">
    <property type="term" value="C:nucleolus"/>
    <property type="evidence" value="ECO:0000314"/>
    <property type="project" value="SGD"/>
</dbReference>
<dbReference type="GO" id="GO:0005634">
    <property type="term" value="C:nucleus"/>
    <property type="evidence" value="ECO:0007005"/>
    <property type="project" value="SGD"/>
</dbReference>
<dbReference type="GO" id="GO:0030687">
    <property type="term" value="C:preribosome, large subunit precursor"/>
    <property type="evidence" value="ECO:0000314"/>
    <property type="project" value="SGD"/>
</dbReference>
<dbReference type="GO" id="GO:0101031">
    <property type="term" value="C:protein folding chaperone complex"/>
    <property type="evidence" value="ECO:0000315"/>
    <property type="project" value="SGD"/>
</dbReference>
<dbReference type="GO" id="GO:0042802">
    <property type="term" value="F:identical protein binding"/>
    <property type="evidence" value="ECO:0000353"/>
    <property type="project" value="IntAct"/>
</dbReference>
<dbReference type="GO" id="GO:0003729">
    <property type="term" value="F:mRNA binding"/>
    <property type="evidence" value="ECO:0000314"/>
    <property type="project" value="SGD"/>
</dbReference>
<dbReference type="GO" id="GO:0043022">
    <property type="term" value="F:ribosome binding"/>
    <property type="evidence" value="ECO:0000314"/>
    <property type="project" value="SGD"/>
</dbReference>
<dbReference type="GO" id="GO:0140691">
    <property type="term" value="F:RNA folding chaperone"/>
    <property type="evidence" value="ECO:0000314"/>
    <property type="project" value="SGD"/>
</dbReference>
<dbReference type="GO" id="GO:0033592">
    <property type="term" value="F:RNA strand annealing activity"/>
    <property type="evidence" value="ECO:0000314"/>
    <property type="project" value="SGD"/>
</dbReference>
<dbReference type="GO" id="GO:0000480">
    <property type="term" value="P:endonucleolytic cleavage in 5'-ETS of tricistronic rRNA transcript (SSU-rRNA, 5.8S rRNA, LSU-rRNA)"/>
    <property type="evidence" value="ECO:0000315"/>
    <property type="project" value="SGD"/>
</dbReference>
<dbReference type="GO" id="GO:0000447">
    <property type="term" value="P:endonucleolytic cleavage in ITS1 to separate SSU-rRNA from 5.8S rRNA and LSU-rRNA from tricistronic rRNA transcript (SSU-rRNA, 5.8S rRNA, LSU-rRNA)"/>
    <property type="evidence" value="ECO:0000315"/>
    <property type="project" value="SGD"/>
</dbReference>
<dbReference type="GO" id="GO:0000472">
    <property type="term" value="P:endonucleolytic cleavage to generate mature 5'-end of SSU-rRNA from (SSU-rRNA, 5.8S rRNA, LSU-rRNA)"/>
    <property type="evidence" value="ECO:0000315"/>
    <property type="project" value="SGD"/>
</dbReference>
<dbReference type="GO" id="GO:0008298">
    <property type="term" value="P:intracellular mRNA localization"/>
    <property type="evidence" value="ECO:0000315"/>
    <property type="project" value="SGD"/>
</dbReference>
<dbReference type="GO" id="GO:0051028">
    <property type="term" value="P:mRNA transport"/>
    <property type="evidence" value="ECO:0007669"/>
    <property type="project" value="UniProtKB-KW"/>
</dbReference>
<dbReference type="GO" id="GO:0017148">
    <property type="term" value="P:negative regulation of translation"/>
    <property type="evidence" value="ECO:0000314"/>
    <property type="project" value="SGD"/>
</dbReference>
<dbReference type="GO" id="GO:0042273">
    <property type="term" value="P:ribosomal large subunit biogenesis"/>
    <property type="evidence" value="ECO:0000315"/>
    <property type="project" value="SGD"/>
</dbReference>
<dbReference type="GO" id="GO:0000055">
    <property type="term" value="P:ribosomal large subunit export from nucleus"/>
    <property type="evidence" value="ECO:0000315"/>
    <property type="project" value="SGD"/>
</dbReference>
<dbReference type="InterPro" id="IPR037650">
    <property type="entry name" value="Loc1"/>
</dbReference>
<dbReference type="PANTHER" id="PTHR28028">
    <property type="entry name" value="60S RIBOSOMAL SUBUNIT ASSEMBLY/EXPORT PROTEIN LOC1"/>
    <property type="match status" value="1"/>
</dbReference>
<dbReference type="PANTHER" id="PTHR28028:SF1">
    <property type="entry name" value="60S RIBOSOMAL SUBUNIT ASSEMBLY_EXPORT PROTEIN LOC1"/>
    <property type="match status" value="1"/>
</dbReference>
<feature type="chain" id="PRO_0000202680" description="60S ribosomal subunit assembly/export protein LOC1">
    <location>
        <begin position="1"/>
        <end position="204"/>
    </location>
</feature>
<feature type="region of interest" description="Disordered" evidence="2">
    <location>
        <begin position="1"/>
        <end position="56"/>
    </location>
</feature>
<feature type="region of interest" description="Disordered" evidence="2">
    <location>
        <begin position="155"/>
        <end position="204"/>
    </location>
</feature>
<feature type="coiled-coil region" evidence="1">
    <location>
        <begin position="120"/>
        <end position="166"/>
    </location>
</feature>
<feature type="compositionally biased region" description="Basic residues" evidence="2">
    <location>
        <begin position="1"/>
        <end position="11"/>
    </location>
</feature>
<feature type="compositionally biased region" description="Polar residues" evidence="2">
    <location>
        <begin position="22"/>
        <end position="31"/>
    </location>
</feature>
<feature type="compositionally biased region" description="Basic and acidic residues" evidence="2">
    <location>
        <begin position="155"/>
        <end position="164"/>
    </location>
</feature>
<feature type="compositionally biased region" description="Basic residues" evidence="2">
    <location>
        <begin position="165"/>
        <end position="177"/>
    </location>
</feature>
<feature type="compositionally biased region" description="Basic and acidic residues" evidence="2">
    <location>
        <begin position="178"/>
        <end position="195"/>
    </location>
</feature>
<feature type="modified residue" description="Phosphoserine" evidence="12">
    <location>
        <position position="24"/>
    </location>
</feature>
<feature type="strand" evidence="13">
    <location>
        <begin position="12"/>
        <end position="15"/>
    </location>
</feature>
<feature type="helix" evidence="13">
    <location>
        <begin position="24"/>
        <end position="28"/>
    </location>
</feature>
<feature type="strand" evidence="13">
    <location>
        <begin position="83"/>
        <end position="85"/>
    </location>
</feature>
<feature type="helix" evidence="13">
    <location>
        <begin position="107"/>
        <end position="115"/>
    </location>
</feature>
<feature type="helix" evidence="13">
    <location>
        <begin position="126"/>
        <end position="146"/>
    </location>
</feature>
<accession>P43586</accession>
<accession>D6VTN1</accession>
<proteinExistence type="evidence at protein level"/>
<name>LOC1_YEAST</name>
<sequence>MAPKKPSKRQNLRREVAPEVFQDSQARNQLANVPHLTEKSAQRKPSKTKVKKEQSLARLYGAKKDKKGKYSEKDLNIPTLNRAIVPGVKIRRGKKGKKFIADNDTLTLNRLITTIGDKYDDIAESKLEKARRLEEIRELKRKEIERKEALKQDKLEEKKDEIKKKSSVARTIRRKNKRDMLKSEAKASESKTEGRKVKKVSFAQ</sequence>
<reference key="1">
    <citation type="journal article" date="1996" name="Yeast">
        <title>Sequencing of a 23 kb fragment from Saccharomyces cerevisiae chromosome VI.</title>
        <authorList>
            <person name="Naitou M."/>
            <person name="Ozawa M."/>
            <person name="Sasanuma S."/>
            <person name="Kobayashi M."/>
            <person name="Hagiwara H."/>
            <person name="Shibata T."/>
            <person name="Hanaoka F."/>
            <person name="Watanabe K."/>
            <person name="Ono A."/>
            <person name="Yamazaki M."/>
            <person name="Tashiro H."/>
            <person name="Eki T."/>
            <person name="Murakami Y."/>
        </authorList>
    </citation>
    <scope>NUCLEOTIDE SEQUENCE [GENOMIC DNA]</scope>
    <source>
        <strain>ATCC 204511 / S288c / AB972</strain>
    </source>
</reference>
<reference key="2">
    <citation type="journal article" date="1995" name="Nat. Genet.">
        <title>Analysis of the nucleotide sequence of chromosome VI from Saccharomyces cerevisiae.</title>
        <authorList>
            <person name="Murakami Y."/>
            <person name="Naitou M."/>
            <person name="Hagiwara H."/>
            <person name="Shibata T."/>
            <person name="Ozawa M."/>
            <person name="Sasanuma S."/>
            <person name="Sasanuma M."/>
            <person name="Tsuchiya Y."/>
            <person name="Soeda E."/>
            <person name="Yokoyama K."/>
            <person name="Yamazaki M."/>
            <person name="Tashiro H."/>
            <person name="Eki T."/>
        </authorList>
    </citation>
    <scope>NUCLEOTIDE SEQUENCE [LARGE SCALE GENOMIC DNA]</scope>
    <source>
        <strain>ATCC 204508 / S288c</strain>
    </source>
</reference>
<reference key="3">
    <citation type="journal article" date="2014" name="G3 (Bethesda)">
        <title>The reference genome sequence of Saccharomyces cerevisiae: Then and now.</title>
        <authorList>
            <person name="Engel S.R."/>
            <person name="Dietrich F.S."/>
            <person name="Fisk D.G."/>
            <person name="Binkley G."/>
            <person name="Balakrishnan R."/>
            <person name="Costanzo M.C."/>
            <person name="Dwight S.S."/>
            <person name="Hitz B.C."/>
            <person name="Karra K."/>
            <person name="Nash R.S."/>
            <person name="Weng S."/>
            <person name="Wong E.D."/>
            <person name="Lloyd P."/>
            <person name="Skrzypek M.S."/>
            <person name="Miyasato S.R."/>
            <person name="Simison M."/>
            <person name="Cherry J.M."/>
        </authorList>
    </citation>
    <scope>GENOME REANNOTATION</scope>
    <source>
        <strain>ATCC 204508 / S288c</strain>
    </source>
</reference>
<reference key="4">
    <citation type="journal article" date="2007" name="Genome Res.">
        <title>Approaching a complete repository of sequence-verified protein-encoding clones for Saccharomyces cerevisiae.</title>
        <authorList>
            <person name="Hu Y."/>
            <person name="Rolfs A."/>
            <person name="Bhullar B."/>
            <person name="Murthy T.V.S."/>
            <person name="Zhu C."/>
            <person name="Berger M.F."/>
            <person name="Camargo A.A."/>
            <person name="Kelley F."/>
            <person name="McCarron S."/>
            <person name="Jepson D."/>
            <person name="Richardson A."/>
            <person name="Raphael J."/>
            <person name="Moreira D."/>
            <person name="Taycher E."/>
            <person name="Zuo D."/>
            <person name="Mohr S."/>
            <person name="Kane M.F."/>
            <person name="Williamson J."/>
            <person name="Simpson A.J.G."/>
            <person name="Bulyk M.L."/>
            <person name="Harlow E."/>
            <person name="Marsischky G."/>
            <person name="Kolodner R.D."/>
            <person name="LaBaer J."/>
        </authorList>
    </citation>
    <scope>NUCLEOTIDE SEQUENCE [GENOMIC DNA]</scope>
    <source>
        <strain>ATCC 204508 / S288c</strain>
    </source>
</reference>
<reference key="5">
    <citation type="journal article" date="2001" name="J. Cell Biol.">
        <title>An exclusively nuclear RNA-binding protein affects asymmetric localization of ASH1 mRNA and Ash1p in yeast.</title>
        <authorList>
            <person name="Long R.M."/>
            <person name="Gu W."/>
            <person name="Meng X."/>
            <person name="Gonsalvez G.B."/>
            <person name="Singer R.H."/>
            <person name="Chartrand P."/>
        </authorList>
    </citation>
    <scope>FUNCTION</scope>
    <scope>SUBCELLULAR LOCATION</scope>
</reference>
<reference key="6">
    <citation type="journal article" date="2001" name="Mol. Cell">
        <title>Composition and functional characterization of yeast 66S ribosome assembly intermediates.</title>
        <authorList>
            <person name="Harnpicharnchai P."/>
            <person name="Jakovljevic J."/>
            <person name="Horsey E."/>
            <person name="Miles T."/>
            <person name="Roman J."/>
            <person name="Rout M."/>
            <person name="Meagher D."/>
            <person name="Imai B."/>
            <person name="Guo Y."/>
            <person name="Brame C.J."/>
            <person name="Shabanowitz J."/>
            <person name="Hunt D.F."/>
            <person name="Woolford J.L. Jr."/>
        </authorList>
    </citation>
    <scope>INTERACTION WITH NOP7</scope>
    <scope>IDENTIFICATION BY MASS SPECTROMETRY</scope>
</reference>
<reference key="7">
    <citation type="journal article" date="2003" name="Nature">
        <title>Global analysis of protein localization in budding yeast.</title>
        <authorList>
            <person name="Huh W.-K."/>
            <person name="Falvo J.V."/>
            <person name="Gerke L.C."/>
            <person name="Carroll A.S."/>
            <person name="Howson R.W."/>
            <person name="Weissman J.S."/>
            <person name="O'Shea E.K."/>
        </authorList>
    </citation>
    <scope>SUBCELLULAR LOCATION [LARGE SCALE ANALYSIS]</scope>
</reference>
<reference key="8">
    <citation type="journal article" date="2003" name="Nature">
        <title>Global analysis of protein expression in yeast.</title>
        <authorList>
            <person name="Ghaemmaghami S."/>
            <person name="Huh W.-K."/>
            <person name="Bower K."/>
            <person name="Howson R.W."/>
            <person name="Belle A."/>
            <person name="Dephoure N."/>
            <person name="O'Shea E.K."/>
            <person name="Weissman J.S."/>
        </authorList>
    </citation>
    <scope>LEVEL OF PROTEIN EXPRESSION [LARGE SCALE ANALYSIS]</scope>
</reference>
<reference key="9">
    <citation type="journal article" date="2004" name="RNA">
        <title>Role of the yeast Rrp1 protein in the dynamics of pre-ribosome maturation.</title>
        <authorList>
            <person name="Horsey E.W."/>
            <person name="Jakovljevic J."/>
            <person name="Miles T.D."/>
            <person name="Harnpicharnchai P."/>
            <person name="Woolford J.L. Jr."/>
        </authorList>
    </citation>
    <scope>INTERACTION WITH RRP1</scope>
    <scope>IDENTIFICATION BY MASS SPECTROMETRY</scope>
</reference>
<reference key="10">
    <citation type="journal article" date="2005" name="RNA">
        <title>Rrp15p, a novel component of pre-ribosomal particles required for 60S ribosome subunit maturation.</title>
        <authorList>
            <person name="De Marchis M.L."/>
            <person name="Giorgi A."/>
            <person name="Schinina M.E."/>
            <person name="Bozzoni I."/>
            <person name="Fatica A."/>
        </authorList>
    </citation>
    <scope>INTERACTION WITH RRP15</scope>
    <scope>IDENTIFICATION BY MASS SPECTROMETRY</scope>
</reference>
<reference key="11">
    <citation type="journal article" date="2006" name="Mol. Genet. Genomics">
        <title>Loc1p is required for efficient assembly and nuclear export of the 60S ribosomal subunit.</title>
        <authorList>
            <person name="Urbinati C.R."/>
            <person name="Gonsalvez G.B."/>
            <person name="Aris J.P."/>
            <person name="Long R.M."/>
        </authorList>
    </citation>
    <scope>FUNCTION</scope>
</reference>
<reference key="12">
    <citation type="journal article" date="2009" name="Mol. Biol. Cell">
        <title>Nuclear shuttling of She2p couples ASH1 mRNA localization to its translational repression by recruiting Loc1p and Puf6p.</title>
        <authorList>
            <person name="Shen Z."/>
            <person name="Paquin N."/>
            <person name="Forget A."/>
            <person name="Chartrand P."/>
        </authorList>
    </citation>
    <scope>INTERACTION WITH SHE2</scope>
</reference>
<reference key="13">
    <citation type="journal article" date="2009" name="Science">
        <title>Global analysis of Cdk1 substrate phosphorylation sites provides insights into evolution.</title>
        <authorList>
            <person name="Holt L.J."/>
            <person name="Tuch B.B."/>
            <person name="Villen J."/>
            <person name="Johnson A.D."/>
            <person name="Gygi S.P."/>
            <person name="Morgan D.O."/>
        </authorList>
    </citation>
    <scope>PHOSPHORYLATION [LARGE SCALE ANALYSIS] AT SER-24</scope>
    <scope>IDENTIFICATION BY MASS SPECTROMETRY [LARGE SCALE ANALYSIS]</scope>
</reference>
<keyword id="KW-0002">3D-structure</keyword>
<keyword id="KW-0175">Coiled coil</keyword>
<keyword id="KW-0509">mRNA transport</keyword>
<keyword id="KW-0539">Nucleus</keyword>
<keyword id="KW-0597">Phosphoprotein</keyword>
<keyword id="KW-1185">Reference proteome</keyword>
<keyword id="KW-0690">Ribosome biogenesis</keyword>
<keyword id="KW-0813">Transport</keyword>
<protein>
    <recommendedName>
        <fullName>60S ribosomal subunit assembly/export protein LOC1</fullName>
    </recommendedName>
    <alternativeName>
        <fullName>Localization of ASH1 mRNA protein 1</fullName>
    </alternativeName>
</protein>